<gene>
    <name evidence="1" type="primary">dnaA</name>
    <name type="ordered locus">RL0375</name>
</gene>
<feature type="chain" id="PRO_1000048701" description="Chromosomal replication initiator protein DnaA">
    <location>
        <begin position="1"/>
        <end position="482"/>
    </location>
</feature>
<feature type="region of interest" description="Domain I, interacts with DnaA modulators" evidence="1">
    <location>
        <begin position="1"/>
        <end position="71"/>
    </location>
</feature>
<feature type="region of interest" description="Domain II" evidence="1">
    <location>
        <begin position="71"/>
        <end position="139"/>
    </location>
</feature>
<feature type="region of interest" description="Domain III, AAA+ region" evidence="1">
    <location>
        <begin position="140"/>
        <end position="362"/>
    </location>
</feature>
<feature type="region of interest" description="Domain IV, binds dsDNA" evidence="1">
    <location>
        <begin position="363"/>
        <end position="482"/>
    </location>
</feature>
<feature type="binding site" evidence="1">
    <location>
        <position position="186"/>
    </location>
    <ligand>
        <name>ATP</name>
        <dbReference type="ChEBI" id="CHEBI:30616"/>
    </ligand>
</feature>
<feature type="binding site" evidence="1">
    <location>
        <position position="188"/>
    </location>
    <ligand>
        <name>ATP</name>
        <dbReference type="ChEBI" id="CHEBI:30616"/>
    </ligand>
</feature>
<feature type="binding site" evidence="1">
    <location>
        <position position="189"/>
    </location>
    <ligand>
        <name>ATP</name>
        <dbReference type="ChEBI" id="CHEBI:30616"/>
    </ligand>
</feature>
<feature type="binding site" evidence="1">
    <location>
        <position position="190"/>
    </location>
    <ligand>
        <name>ATP</name>
        <dbReference type="ChEBI" id="CHEBI:30616"/>
    </ligand>
</feature>
<dbReference type="EMBL" id="AM236080">
    <property type="protein sequence ID" value="CAK05866.1"/>
    <property type="molecule type" value="Genomic_DNA"/>
</dbReference>
<dbReference type="SMR" id="Q1MMD6"/>
<dbReference type="EnsemblBacteria" id="CAK05866">
    <property type="protein sequence ID" value="CAK05866"/>
    <property type="gene ID" value="RL0375"/>
</dbReference>
<dbReference type="KEGG" id="rle:RL0375"/>
<dbReference type="eggNOG" id="COG0593">
    <property type="taxonomic scope" value="Bacteria"/>
</dbReference>
<dbReference type="HOGENOM" id="CLU_026910_3_0_5"/>
<dbReference type="Proteomes" id="UP000006575">
    <property type="component" value="Chromosome"/>
</dbReference>
<dbReference type="GO" id="GO:0005737">
    <property type="term" value="C:cytoplasm"/>
    <property type="evidence" value="ECO:0007669"/>
    <property type="project" value="UniProtKB-SubCell"/>
</dbReference>
<dbReference type="GO" id="GO:0005886">
    <property type="term" value="C:plasma membrane"/>
    <property type="evidence" value="ECO:0007669"/>
    <property type="project" value="TreeGrafter"/>
</dbReference>
<dbReference type="GO" id="GO:0005524">
    <property type="term" value="F:ATP binding"/>
    <property type="evidence" value="ECO:0007669"/>
    <property type="project" value="UniProtKB-UniRule"/>
</dbReference>
<dbReference type="GO" id="GO:0016887">
    <property type="term" value="F:ATP hydrolysis activity"/>
    <property type="evidence" value="ECO:0007669"/>
    <property type="project" value="InterPro"/>
</dbReference>
<dbReference type="GO" id="GO:0003688">
    <property type="term" value="F:DNA replication origin binding"/>
    <property type="evidence" value="ECO:0007669"/>
    <property type="project" value="UniProtKB-UniRule"/>
</dbReference>
<dbReference type="GO" id="GO:0008289">
    <property type="term" value="F:lipid binding"/>
    <property type="evidence" value="ECO:0007669"/>
    <property type="project" value="UniProtKB-KW"/>
</dbReference>
<dbReference type="GO" id="GO:0006270">
    <property type="term" value="P:DNA replication initiation"/>
    <property type="evidence" value="ECO:0007669"/>
    <property type="project" value="UniProtKB-UniRule"/>
</dbReference>
<dbReference type="GO" id="GO:0006275">
    <property type="term" value="P:regulation of DNA replication"/>
    <property type="evidence" value="ECO:0007669"/>
    <property type="project" value="UniProtKB-UniRule"/>
</dbReference>
<dbReference type="CDD" id="cd00009">
    <property type="entry name" value="AAA"/>
    <property type="match status" value="1"/>
</dbReference>
<dbReference type="CDD" id="cd06571">
    <property type="entry name" value="Bac_DnaA_C"/>
    <property type="match status" value="1"/>
</dbReference>
<dbReference type="FunFam" id="1.10.1750.10:FF:000002">
    <property type="entry name" value="Chromosomal replication initiator protein DnaA"/>
    <property type="match status" value="1"/>
</dbReference>
<dbReference type="Gene3D" id="1.10.1750.10">
    <property type="match status" value="1"/>
</dbReference>
<dbReference type="Gene3D" id="1.10.8.60">
    <property type="match status" value="1"/>
</dbReference>
<dbReference type="Gene3D" id="3.30.300.180">
    <property type="match status" value="1"/>
</dbReference>
<dbReference type="Gene3D" id="3.40.50.300">
    <property type="entry name" value="P-loop containing nucleotide triphosphate hydrolases"/>
    <property type="match status" value="1"/>
</dbReference>
<dbReference type="HAMAP" id="MF_00377">
    <property type="entry name" value="DnaA_bact"/>
    <property type="match status" value="1"/>
</dbReference>
<dbReference type="InterPro" id="IPR003593">
    <property type="entry name" value="AAA+_ATPase"/>
</dbReference>
<dbReference type="InterPro" id="IPR001957">
    <property type="entry name" value="Chromosome_initiator_DnaA"/>
</dbReference>
<dbReference type="InterPro" id="IPR020591">
    <property type="entry name" value="Chromosome_initiator_DnaA-like"/>
</dbReference>
<dbReference type="InterPro" id="IPR018312">
    <property type="entry name" value="Chromosome_initiator_DnaA_CS"/>
</dbReference>
<dbReference type="InterPro" id="IPR013159">
    <property type="entry name" value="DnaA_C"/>
</dbReference>
<dbReference type="InterPro" id="IPR013317">
    <property type="entry name" value="DnaA_dom"/>
</dbReference>
<dbReference type="InterPro" id="IPR024633">
    <property type="entry name" value="DnaA_N_dom"/>
</dbReference>
<dbReference type="InterPro" id="IPR038454">
    <property type="entry name" value="DnaA_N_sf"/>
</dbReference>
<dbReference type="InterPro" id="IPR027417">
    <property type="entry name" value="P-loop_NTPase"/>
</dbReference>
<dbReference type="InterPro" id="IPR010921">
    <property type="entry name" value="Trp_repressor/repl_initiator"/>
</dbReference>
<dbReference type="NCBIfam" id="TIGR00362">
    <property type="entry name" value="DnaA"/>
    <property type="match status" value="1"/>
</dbReference>
<dbReference type="PANTHER" id="PTHR30050">
    <property type="entry name" value="CHROMOSOMAL REPLICATION INITIATOR PROTEIN DNAA"/>
    <property type="match status" value="1"/>
</dbReference>
<dbReference type="PANTHER" id="PTHR30050:SF2">
    <property type="entry name" value="CHROMOSOMAL REPLICATION INITIATOR PROTEIN DNAA"/>
    <property type="match status" value="1"/>
</dbReference>
<dbReference type="Pfam" id="PF00308">
    <property type="entry name" value="Bac_DnaA"/>
    <property type="match status" value="1"/>
</dbReference>
<dbReference type="Pfam" id="PF08299">
    <property type="entry name" value="Bac_DnaA_C"/>
    <property type="match status" value="1"/>
</dbReference>
<dbReference type="Pfam" id="PF11638">
    <property type="entry name" value="DnaA_N"/>
    <property type="match status" value="1"/>
</dbReference>
<dbReference type="PRINTS" id="PR00051">
    <property type="entry name" value="DNAA"/>
</dbReference>
<dbReference type="SMART" id="SM00382">
    <property type="entry name" value="AAA"/>
    <property type="match status" value="1"/>
</dbReference>
<dbReference type="SMART" id="SM00760">
    <property type="entry name" value="Bac_DnaA_C"/>
    <property type="match status" value="1"/>
</dbReference>
<dbReference type="SUPFAM" id="SSF52540">
    <property type="entry name" value="P-loop containing nucleoside triphosphate hydrolases"/>
    <property type="match status" value="1"/>
</dbReference>
<dbReference type="SUPFAM" id="SSF48295">
    <property type="entry name" value="TrpR-like"/>
    <property type="match status" value="1"/>
</dbReference>
<dbReference type="PROSITE" id="PS01008">
    <property type="entry name" value="DNAA"/>
    <property type="match status" value="1"/>
</dbReference>
<organism>
    <name type="scientific">Rhizobium johnstonii (strain DSM 114642 / LMG 32736 / 3841)</name>
    <name type="common">Rhizobium leguminosarum bv. viciae</name>
    <dbReference type="NCBI Taxonomy" id="216596"/>
    <lineage>
        <taxon>Bacteria</taxon>
        <taxon>Pseudomonadati</taxon>
        <taxon>Pseudomonadota</taxon>
        <taxon>Alphaproteobacteria</taxon>
        <taxon>Hyphomicrobiales</taxon>
        <taxon>Rhizobiaceae</taxon>
        <taxon>Rhizobium/Agrobacterium group</taxon>
        <taxon>Rhizobium</taxon>
        <taxon>Rhizobium johnstonii</taxon>
    </lineage>
</organism>
<reference key="1">
    <citation type="journal article" date="2006" name="Genome Biol.">
        <title>The genome of Rhizobium leguminosarum has recognizable core and accessory components.</title>
        <authorList>
            <person name="Young J.P.W."/>
            <person name="Crossman L.C."/>
            <person name="Johnston A.W.B."/>
            <person name="Thomson N.R."/>
            <person name="Ghazoui Z.F."/>
            <person name="Hull K.H."/>
            <person name="Wexler M."/>
            <person name="Curson A.R.J."/>
            <person name="Todd J.D."/>
            <person name="Poole P.S."/>
            <person name="Mauchline T.H."/>
            <person name="East A.K."/>
            <person name="Quail M.A."/>
            <person name="Churcher C."/>
            <person name="Arrowsmith C."/>
            <person name="Cherevach I."/>
            <person name="Chillingworth T."/>
            <person name="Clarke K."/>
            <person name="Cronin A."/>
            <person name="Davis P."/>
            <person name="Fraser A."/>
            <person name="Hance Z."/>
            <person name="Hauser H."/>
            <person name="Jagels K."/>
            <person name="Moule S."/>
            <person name="Mungall K."/>
            <person name="Norbertczak H."/>
            <person name="Rabbinowitsch E."/>
            <person name="Sanders M."/>
            <person name="Simmonds M."/>
            <person name="Whitehead S."/>
            <person name="Parkhill J."/>
        </authorList>
    </citation>
    <scope>NUCLEOTIDE SEQUENCE [LARGE SCALE GENOMIC DNA]</scope>
    <source>
        <strain>DSM 114642 / LMG 32736 / 3841</strain>
    </source>
</reference>
<keyword id="KW-0067">ATP-binding</keyword>
<keyword id="KW-0963">Cytoplasm</keyword>
<keyword id="KW-0235">DNA replication</keyword>
<keyword id="KW-0238">DNA-binding</keyword>
<keyword id="KW-0446">Lipid-binding</keyword>
<keyword id="KW-0547">Nucleotide-binding</keyword>
<proteinExistence type="inferred from homology"/>
<protein>
    <recommendedName>
        <fullName evidence="1">Chromosomal replication initiator protein DnaA</fullName>
    </recommendedName>
</protein>
<accession>Q1MMD6</accession>
<comment type="function">
    <text evidence="1">Plays an essential role in the initiation and regulation of chromosomal replication. ATP-DnaA binds to the origin of replication (oriC) to initiate formation of the DNA replication initiation complex once per cell cycle. Binds the DnaA box (a 9 base pair repeat at the origin) and separates the double-stranded (ds)DNA. Forms a right-handed helical filament on oriC DNA; dsDNA binds to the exterior of the filament while single-stranded (ss)DNA is stabiized in the filament's interior. The ATP-DnaA-oriC complex binds and stabilizes one strand of the AT-rich DNA unwinding element (DUE), permitting loading of DNA polymerase. After initiation quickly degrades to an ADP-DnaA complex that is not apt for DNA replication. Binds acidic phospholipids.</text>
</comment>
<comment type="subunit">
    <text evidence="1">Oligomerizes as a right-handed, spiral filament on DNA at oriC.</text>
</comment>
<comment type="subcellular location">
    <subcellularLocation>
        <location evidence="1">Cytoplasm</location>
    </subcellularLocation>
</comment>
<comment type="domain">
    <text evidence="1">Domain I is involved in oligomerization and binding regulators, domain II is flexibile and of varying length in different bacteria, domain III forms the AAA+ region, while domain IV binds dsDNA.</text>
</comment>
<comment type="similarity">
    <text evidence="1">Belongs to the DnaA family.</text>
</comment>
<name>DNAA_RHIJ3</name>
<sequence length="482" mass="54079">MKQSILFERVSARLKAQVGPDVYASWFARLKLHSVSKSVVRLSVPTTFLKSWINNRYLDLITGLFQAEDPEILKIEVLVRTATRHGTKALDEVVAPEPAAPTQMRRPTSAQPAGQAVQQAVSAVAAARPASFGSPLFGSPLDSRFTFDTFVEGSSNRVALAAAKTIAEAGQGAVRFNPLFIHSTVGLGKTHLLQAVANAAVQNPRSLRVVYLTAEYFMWRFATAIRDNDALTLKDSLRNIDLLIIDDMQFLQGKMIQHEFCHLLNMLLDSAKQVVVAADRAPWELESLDPRVRSRLQGGVAIEFDAPDYEMRLEILKRRLAVARLEDPSLEIPAELLQHVARNVTASGRELEGAFNQLVFRRSFEPNLSIERVDELLAHLVGSGEPRRVRIEDIQRIVARHYNVSRQELVSNRRTRVIVKPRQIAMYLSKTLTPRSFPEIGRRFGGRDHTTVLHAVRKIEELISGDTKLSHEVELLKRLINE</sequence>
<evidence type="ECO:0000255" key="1">
    <source>
        <dbReference type="HAMAP-Rule" id="MF_00377"/>
    </source>
</evidence>